<proteinExistence type="inferred from homology"/>
<organism>
    <name type="scientific">Bdellovibrio bacteriovorus (strain ATCC 15356 / DSM 50701 / NCIMB 9529 / HD100)</name>
    <dbReference type="NCBI Taxonomy" id="264462"/>
    <lineage>
        <taxon>Bacteria</taxon>
        <taxon>Pseudomonadati</taxon>
        <taxon>Bdellovibrionota</taxon>
        <taxon>Bdellovibrionia</taxon>
        <taxon>Bdellovibrionales</taxon>
        <taxon>Pseudobdellovibrionaceae</taxon>
        <taxon>Bdellovibrio</taxon>
    </lineage>
</organism>
<protein>
    <recommendedName>
        <fullName evidence="1">Small ribosomal subunit protein uS17</fullName>
    </recommendedName>
    <alternativeName>
        <fullName evidence="2">30S ribosomal protein S17</fullName>
    </alternativeName>
</protein>
<reference key="1">
    <citation type="journal article" date="2004" name="Science">
        <title>A predator unmasked: life cycle of Bdellovibrio bacteriovorus from a genomic perspective.</title>
        <authorList>
            <person name="Rendulic S."/>
            <person name="Jagtap P."/>
            <person name="Rosinus A."/>
            <person name="Eppinger M."/>
            <person name="Baar C."/>
            <person name="Lanz C."/>
            <person name="Keller H."/>
            <person name="Lambert C."/>
            <person name="Evans K.J."/>
            <person name="Goesmann A."/>
            <person name="Meyer F."/>
            <person name="Sockett R.E."/>
            <person name="Schuster S.C."/>
        </authorList>
    </citation>
    <scope>NUCLEOTIDE SEQUENCE [LARGE SCALE GENOMIC DNA]</scope>
    <source>
        <strain>ATCC 15356 / DSM 50701 / NCIMB 9529 / HD100</strain>
    </source>
</reference>
<gene>
    <name evidence="1" type="primary">rpsQ</name>
    <name type="ordered locus">Bd2967</name>
</gene>
<name>RS17_BDEBA</name>
<feature type="chain" id="PRO_0000233431" description="Small ribosomal subunit protein uS17">
    <location>
        <begin position="1"/>
        <end position="89"/>
    </location>
</feature>
<accession>Q6MJ23</accession>
<comment type="function">
    <text evidence="1">One of the primary rRNA binding proteins, it binds specifically to the 5'-end of 16S ribosomal RNA.</text>
</comment>
<comment type="subunit">
    <text evidence="1">Part of the 30S ribosomal subunit.</text>
</comment>
<comment type="similarity">
    <text evidence="1">Belongs to the universal ribosomal protein uS17 family.</text>
</comment>
<evidence type="ECO:0000255" key="1">
    <source>
        <dbReference type="HAMAP-Rule" id="MF_01345"/>
    </source>
</evidence>
<evidence type="ECO:0000305" key="2"/>
<dbReference type="EMBL" id="BX842654">
    <property type="protein sequence ID" value="CAE80739.1"/>
    <property type="molecule type" value="Genomic_DNA"/>
</dbReference>
<dbReference type="RefSeq" id="WP_011165343.1">
    <property type="nucleotide sequence ID" value="NC_005363.1"/>
</dbReference>
<dbReference type="SMR" id="Q6MJ23"/>
<dbReference type="STRING" id="264462.Bd2967"/>
<dbReference type="GeneID" id="93013830"/>
<dbReference type="KEGG" id="bba:Bd2967"/>
<dbReference type="eggNOG" id="COG0186">
    <property type="taxonomic scope" value="Bacteria"/>
</dbReference>
<dbReference type="HOGENOM" id="CLU_073626_1_1_7"/>
<dbReference type="Proteomes" id="UP000008080">
    <property type="component" value="Chromosome"/>
</dbReference>
<dbReference type="GO" id="GO:0022627">
    <property type="term" value="C:cytosolic small ribosomal subunit"/>
    <property type="evidence" value="ECO:0007669"/>
    <property type="project" value="TreeGrafter"/>
</dbReference>
<dbReference type="GO" id="GO:0019843">
    <property type="term" value="F:rRNA binding"/>
    <property type="evidence" value="ECO:0007669"/>
    <property type="project" value="UniProtKB-UniRule"/>
</dbReference>
<dbReference type="GO" id="GO:0003735">
    <property type="term" value="F:structural constituent of ribosome"/>
    <property type="evidence" value="ECO:0007669"/>
    <property type="project" value="InterPro"/>
</dbReference>
<dbReference type="GO" id="GO:0006412">
    <property type="term" value="P:translation"/>
    <property type="evidence" value="ECO:0007669"/>
    <property type="project" value="UniProtKB-UniRule"/>
</dbReference>
<dbReference type="CDD" id="cd00364">
    <property type="entry name" value="Ribosomal_uS17"/>
    <property type="match status" value="1"/>
</dbReference>
<dbReference type="Gene3D" id="2.40.50.140">
    <property type="entry name" value="Nucleic acid-binding proteins"/>
    <property type="match status" value="1"/>
</dbReference>
<dbReference type="HAMAP" id="MF_01345_B">
    <property type="entry name" value="Ribosomal_uS17_B"/>
    <property type="match status" value="1"/>
</dbReference>
<dbReference type="InterPro" id="IPR012340">
    <property type="entry name" value="NA-bd_OB-fold"/>
</dbReference>
<dbReference type="InterPro" id="IPR000266">
    <property type="entry name" value="Ribosomal_uS17"/>
</dbReference>
<dbReference type="InterPro" id="IPR019984">
    <property type="entry name" value="Ribosomal_uS17_bact/chlr"/>
</dbReference>
<dbReference type="InterPro" id="IPR019979">
    <property type="entry name" value="Ribosomal_uS17_CS"/>
</dbReference>
<dbReference type="NCBIfam" id="NF004123">
    <property type="entry name" value="PRK05610.1"/>
    <property type="match status" value="1"/>
</dbReference>
<dbReference type="NCBIfam" id="TIGR03635">
    <property type="entry name" value="uS17_bact"/>
    <property type="match status" value="1"/>
</dbReference>
<dbReference type="PANTHER" id="PTHR10744">
    <property type="entry name" value="40S RIBOSOMAL PROTEIN S11 FAMILY MEMBER"/>
    <property type="match status" value="1"/>
</dbReference>
<dbReference type="PANTHER" id="PTHR10744:SF1">
    <property type="entry name" value="SMALL RIBOSOMAL SUBUNIT PROTEIN US17M"/>
    <property type="match status" value="1"/>
</dbReference>
<dbReference type="Pfam" id="PF00366">
    <property type="entry name" value="Ribosomal_S17"/>
    <property type="match status" value="1"/>
</dbReference>
<dbReference type="PRINTS" id="PR00973">
    <property type="entry name" value="RIBOSOMALS17"/>
</dbReference>
<dbReference type="SUPFAM" id="SSF50249">
    <property type="entry name" value="Nucleic acid-binding proteins"/>
    <property type="match status" value="1"/>
</dbReference>
<dbReference type="PROSITE" id="PS00056">
    <property type="entry name" value="RIBOSOMAL_S17"/>
    <property type="match status" value="1"/>
</dbReference>
<sequence length="89" mass="10178">MTETNSRGRKIEVVGEVISDKMDKTISVLIYRMVKHAKYGKYVKKTSVFKAHDEKNQAKIGDIVKIRETRPLSKTKRWALAEVVETAKA</sequence>
<keyword id="KW-1185">Reference proteome</keyword>
<keyword id="KW-0687">Ribonucleoprotein</keyword>
<keyword id="KW-0689">Ribosomal protein</keyword>
<keyword id="KW-0694">RNA-binding</keyword>
<keyword id="KW-0699">rRNA-binding</keyword>